<evidence type="ECO:0000255" key="1">
    <source>
        <dbReference type="HAMAP-Rule" id="MF_00672"/>
    </source>
</evidence>
<organism>
    <name type="scientific">Escherichia coli O8 (strain IAI1)</name>
    <dbReference type="NCBI Taxonomy" id="585034"/>
    <lineage>
        <taxon>Bacteria</taxon>
        <taxon>Pseudomonadati</taxon>
        <taxon>Pseudomonadota</taxon>
        <taxon>Gammaproteobacteria</taxon>
        <taxon>Enterobacterales</taxon>
        <taxon>Enterobacteriaceae</taxon>
        <taxon>Escherichia</taxon>
    </lineage>
</organism>
<keyword id="KW-0997">Cell inner membrane</keyword>
<keyword id="KW-1003">Cell membrane</keyword>
<keyword id="KW-0472">Membrane</keyword>
<keyword id="KW-0812">Transmembrane</keyword>
<keyword id="KW-1133">Transmembrane helix</keyword>
<feature type="chain" id="PRO_1000131549" description="UPF0761 membrane protein YihY">
    <location>
        <begin position="1"/>
        <end position="290"/>
    </location>
</feature>
<feature type="transmembrane region" description="Helical" evidence="1">
    <location>
        <begin position="44"/>
        <end position="64"/>
    </location>
</feature>
<feature type="transmembrane region" description="Helical" evidence="1">
    <location>
        <begin position="104"/>
        <end position="124"/>
    </location>
</feature>
<feature type="transmembrane region" description="Helical" evidence="1">
    <location>
        <begin position="140"/>
        <end position="160"/>
    </location>
</feature>
<feature type="transmembrane region" description="Helical" evidence="1">
    <location>
        <begin position="183"/>
        <end position="203"/>
    </location>
</feature>
<feature type="transmembrane region" description="Helical" evidence="1">
    <location>
        <begin position="210"/>
        <end position="230"/>
    </location>
</feature>
<feature type="transmembrane region" description="Helical" evidence="1">
    <location>
        <begin position="244"/>
        <end position="264"/>
    </location>
</feature>
<reference key="1">
    <citation type="journal article" date="2009" name="PLoS Genet.">
        <title>Organised genome dynamics in the Escherichia coli species results in highly diverse adaptive paths.</title>
        <authorList>
            <person name="Touchon M."/>
            <person name="Hoede C."/>
            <person name="Tenaillon O."/>
            <person name="Barbe V."/>
            <person name="Baeriswyl S."/>
            <person name="Bidet P."/>
            <person name="Bingen E."/>
            <person name="Bonacorsi S."/>
            <person name="Bouchier C."/>
            <person name="Bouvet O."/>
            <person name="Calteau A."/>
            <person name="Chiapello H."/>
            <person name="Clermont O."/>
            <person name="Cruveiller S."/>
            <person name="Danchin A."/>
            <person name="Diard M."/>
            <person name="Dossat C."/>
            <person name="Karoui M.E."/>
            <person name="Frapy E."/>
            <person name="Garry L."/>
            <person name="Ghigo J.M."/>
            <person name="Gilles A.M."/>
            <person name="Johnson J."/>
            <person name="Le Bouguenec C."/>
            <person name="Lescat M."/>
            <person name="Mangenot S."/>
            <person name="Martinez-Jehanne V."/>
            <person name="Matic I."/>
            <person name="Nassif X."/>
            <person name="Oztas S."/>
            <person name="Petit M.A."/>
            <person name="Pichon C."/>
            <person name="Rouy Z."/>
            <person name="Ruf C.S."/>
            <person name="Schneider D."/>
            <person name="Tourret J."/>
            <person name="Vacherie B."/>
            <person name="Vallenet D."/>
            <person name="Medigue C."/>
            <person name="Rocha E.P.C."/>
            <person name="Denamur E."/>
        </authorList>
    </citation>
    <scope>NUCLEOTIDE SEQUENCE [LARGE SCALE GENOMIC DNA]</scope>
    <source>
        <strain>IAI1</strain>
    </source>
</reference>
<comment type="subcellular location">
    <subcellularLocation>
        <location evidence="1">Cell inner membrane</location>
        <topology evidence="1">Multi-pass membrane protein</topology>
    </subcellularLocation>
</comment>
<comment type="similarity">
    <text evidence="1">Belongs to the UPF0761 family.</text>
</comment>
<protein>
    <recommendedName>
        <fullName evidence="1">UPF0761 membrane protein YihY</fullName>
    </recommendedName>
</protein>
<name>YIHY_ECO8A</name>
<proteinExistence type="inferred from homology"/>
<gene>
    <name evidence="1" type="primary">yihY</name>
    <name type="ordered locus">ECIAI1_4086</name>
</gene>
<sequence length="290" mass="32839">MLKTIQDKARHRTRPLWAWLKLLWQRIDEDNMTTLAGNLAYVSLLSLVPLVAVVFALFAAFPMFSDVSIQLRHFIFANFLPATGDVIQRYIEQFVANSNKMTAVGACGLIVTALLLMYSIDSALNTIWRSKRARPKIYSFAVYWMILTLGPLLAGASLAISSYLLSLRWASDLNTVIDNVLRIFPLLLSWISFWLLYSIVPTIRVPNRDAIVGAFVAALLFEAGKKGFALYITMFPSYQLIYGVLAVIPILFVWVYWTWCIVLLGAEITVTLGEYRKLKQAAEQEEDDEP</sequence>
<accession>B7M685</accession>
<dbReference type="EMBL" id="CU928160">
    <property type="protein sequence ID" value="CAR00857.1"/>
    <property type="molecule type" value="Genomic_DNA"/>
</dbReference>
<dbReference type="RefSeq" id="WP_000920762.1">
    <property type="nucleotide sequence ID" value="NC_011741.1"/>
</dbReference>
<dbReference type="KEGG" id="ecr:ECIAI1_4086"/>
<dbReference type="HOGENOM" id="CLU_032288_0_0_6"/>
<dbReference type="GO" id="GO:0005886">
    <property type="term" value="C:plasma membrane"/>
    <property type="evidence" value="ECO:0007669"/>
    <property type="project" value="UniProtKB-SubCell"/>
</dbReference>
<dbReference type="HAMAP" id="MF_00672">
    <property type="entry name" value="UPF0761"/>
    <property type="match status" value="1"/>
</dbReference>
<dbReference type="InterPro" id="IPR023679">
    <property type="entry name" value="UPF0761_bac"/>
</dbReference>
<dbReference type="InterPro" id="IPR017039">
    <property type="entry name" value="Virul_fac_BrkB"/>
</dbReference>
<dbReference type="NCBIfam" id="NF002457">
    <property type="entry name" value="PRK01637.1"/>
    <property type="match status" value="1"/>
</dbReference>
<dbReference type="NCBIfam" id="TIGR00765">
    <property type="entry name" value="yihY_not_rbn"/>
    <property type="match status" value="1"/>
</dbReference>
<dbReference type="PANTHER" id="PTHR30213">
    <property type="entry name" value="INNER MEMBRANE PROTEIN YHJD"/>
    <property type="match status" value="1"/>
</dbReference>
<dbReference type="PANTHER" id="PTHR30213:SF0">
    <property type="entry name" value="UPF0761 MEMBRANE PROTEIN YIHY"/>
    <property type="match status" value="1"/>
</dbReference>
<dbReference type="Pfam" id="PF03631">
    <property type="entry name" value="Virul_fac_BrkB"/>
    <property type="match status" value="1"/>
</dbReference>
<dbReference type="PIRSF" id="PIRSF035875">
    <property type="entry name" value="RNase_BN"/>
    <property type="match status" value="1"/>
</dbReference>